<organism>
    <name type="scientific">Campylobacter jejuni subsp. doylei (strain ATCC BAA-1458 / RM4099 / 269.97)</name>
    <dbReference type="NCBI Taxonomy" id="360109"/>
    <lineage>
        <taxon>Bacteria</taxon>
        <taxon>Pseudomonadati</taxon>
        <taxon>Campylobacterota</taxon>
        <taxon>Epsilonproteobacteria</taxon>
        <taxon>Campylobacterales</taxon>
        <taxon>Campylobacteraceae</taxon>
        <taxon>Campylobacter</taxon>
    </lineage>
</organism>
<dbReference type="EC" id="2.6.99.2" evidence="1"/>
<dbReference type="EMBL" id="CP000768">
    <property type="protein sequence ID" value="ABS43652.1"/>
    <property type="molecule type" value="Genomic_DNA"/>
</dbReference>
<dbReference type="SMR" id="A7H2E1"/>
<dbReference type="KEGG" id="cjd:JJD26997_0487"/>
<dbReference type="HOGENOM" id="CLU_074563_0_0_7"/>
<dbReference type="UniPathway" id="UPA00244">
    <property type="reaction ID" value="UER00313"/>
</dbReference>
<dbReference type="Proteomes" id="UP000002302">
    <property type="component" value="Chromosome"/>
</dbReference>
<dbReference type="GO" id="GO:0005829">
    <property type="term" value="C:cytosol"/>
    <property type="evidence" value="ECO:0007669"/>
    <property type="project" value="TreeGrafter"/>
</dbReference>
<dbReference type="GO" id="GO:0033856">
    <property type="term" value="F:pyridoxine 5'-phosphate synthase activity"/>
    <property type="evidence" value="ECO:0007669"/>
    <property type="project" value="UniProtKB-EC"/>
</dbReference>
<dbReference type="GO" id="GO:0008615">
    <property type="term" value="P:pyridoxine biosynthetic process"/>
    <property type="evidence" value="ECO:0007669"/>
    <property type="project" value="UniProtKB-UniRule"/>
</dbReference>
<dbReference type="CDD" id="cd00003">
    <property type="entry name" value="PNPsynthase"/>
    <property type="match status" value="1"/>
</dbReference>
<dbReference type="Gene3D" id="3.20.20.70">
    <property type="entry name" value="Aldolase class I"/>
    <property type="match status" value="1"/>
</dbReference>
<dbReference type="HAMAP" id="MF_00279">
    <property type="entry name" value="PdxJ"/>
    <property type="match status" value="1"/>
</dbReference>
<dbReference type="InterPro" id="IPR013785">
    <property type="entry name" value="Aldolase_TIM"/>
</dbReference>
<dbReference type="InterPro" id="IPR004569">
    <property type="entry name" value="PyrdxlP_synth_PdxJ"/>
</dbReference>
<dbReference type="InterPro" id="IPR036130">
    <property type="entry name" value="Pyridoxine-5'_phos_synth"/>
</dbReference>
<dbReference type="NCBIfam" id="TIGR00559">
    <property type="entry name" value="pdxJ"/>
    <property type="match status" value="1"/>
</dbReference>
<dbReference type="NCBIfam" id="NF003625">
    <property type="entry name" value="PRK05265.1-3"/>
    <property type="match status" value="1"/>
</dbReference>
<dbReference type="NCBIfam" id="NF003627">
    <property type="entry name" value="PRK05265.1-5"/>
    <property type="match status" value="1"/>
</dbReference>
<dbReference type="PANTHER" id="PTHR30456">
    <property type="entry name" value="PYRIDOXINE 5'-PHOSPHATE SYNTHASE"/>
    <property type="match status" value="1"/>
</dbReference>
<dbReference type="PANTHER" id="PTHR30456:SF0">
    <property type="entry name" value="PYRIDOXINE 5'-PHOSPHATE SYNTHASE"/>
    <property type="match status" value="1"/>
</dbReference>
<dbReference type="Pfam" id="PF03740">
    <property type="entry name" value="PdxJ"/>
    <property type="match status" value="1"/>
</dbReference>
<dbReference type="SUPFAM" id="SSF63892">
    <property type="entry name" value="Pyridoxine 5'-phosphate synthase"/>
    <property type="match status" value="1"/>
</dbReference>
<name>PDXJ_CAMJD</name>
<gene>
    <name evidence="1" type="primary">pdxJ</name>
    <name type="ordered locus">JJD26997_0487</name>
</gene>
<feature type="chain" id="PRO_1000022367" description="Pyridoxine 5'-phosphate synthase">
    <location>
        <begin position="1"/>
        <end position="257"/>
    </location>
</feature>
<feature type="active site" description="Proton acceptor" evidence="1">
    <location>
        <position position="41"/>
    </location>
</feature>
<feature type="active site" description="Proton acceptor" evidence="1">
    <location>
        <position position="68"/>
    </location>
</feature>
<feature type="active site" description="Proton donor" evidence="1">
    <location>
        <position position="210"/>
    </location>
</feature>
<feature type="binding site" evidence="1">
    <location>
        <position position="6"/>
    </location>
    <ligand>
        <name>3-amino-2-oxopropyl phosphate</name>
        <dbReference type="ChEBI" id="CHEBI:57279"/>
    </ligand>
</feature>
<feature type="binding site" evidence="1">
    <location>
        <begin position="8"/>
        <end position="9"/>
    </location>
    <ligand>
        <name>1-deoxy-D-xylulose 5-phosphate</name>
        <dbReference type="ChEBI" id="CHEBI:57792"/>
    </ligand>
</feature>
<feature type="binding site" evidence="1">
    <location>
        <position position="17"/>
    </location>
    <ligand>
        <name>3-amino-2-oxopropyl phosphate</name>
        <dbReference type="ChEBI" id="CHEBI:57279"/>
    </ligand>
</feature>
<feature type="binding site" evidence="1">
    <location>
        <position position="43"/>
    </location>
    <ligand>
        <name>1-deoxy-D-xylulose 5-phosphate</name>
        <dbReference type="ChEBI" id="CHEBI:57792"/>
    </ligand>
</feature>
<feature type="binding site" evidence="1">
    <location>
        <position position="48"/>
    </location>
    <ligand>
        <name>1-deoxy-D-xylulose 5-phosphate</name>
        <dbReference type="ChEBI" id="CHEBI:57792"/>
    </ligand>
</feature>
<feature type="binding site" evidence="1">
    <location>
        <position position="98"/>
    </location>
    <ligand>
        <name>1-deoxy-D-xylulose 5-phosphate</name>
        <dbReference type="ChEBI" id="CHEBI:57792"/>
    </ligand>
</feature>
<feature type="binding site" evidence="1">
    <location>
        <position position="211"/>
    </location>
    <ligand>
        <name>3-amino-2-oxopropyl phosphate</name>
        <dbReference type="ChEBI" id="CHEBI:57279"/>
    </ligand>
</feature>
<feature type="binding site" evidence="1">
    <location>
        <begin position="232"/>
        <end position="233"/>
    </location>
    <ligand>
        <name>3-amino-2-oxopropyl phosphate</name>
        <dbReference type="ChEBI" id="CHEBI:57279"/>
    </ligand>
</feature>
<feature type="site" description="Transition state stabilizer" evidence="1">
    <location>
        <position position="147"/>
    </location>
</feature>
<keyword id="KW-0963">Cytoplasm</keyword>
<keyword id="KW-0664">Pyridoxine biosynthesis</keyword>
<keyword id="KW-0808">Transferase</keyword>
<accession>A7H2E1</accession>
<reference key="1">
    <citation type="submission" date="2007-07" db="EMBL/GenBank/DDBJ databases">
        <title>Complete genome sequence of Campylobacter jejuni subsp doylei 269.97 isolated from human blood.</title>
        <authorList>
            <person name="Fouts D.E."/>
            <person name="Mongodin E.F."/>
            <person name="Puiu D."/>
            <person name="Sebastian Y."/>
            <person name="Miller W.G."/>
            <person name="Mandrell R.E."/>
            <person name="Lastovica A.J."/>
            <person name="Nelson K.E."/>
        </authorList>
    </citation>
    <scope>NUCLEOTIDE SEQUENCE [LARGE SCALE GENOMIC DNA]</scope>
    <source>
        <strain>ATCC BAA-1458 / RM4099 / 269.97</strain>
    </source>
</reference>
<proteinExistence type="inferred from homology"/>
<sequence length="257" mass="29068">MLLGVNIDHIAVLRQARMVNDPDLLEAAFIAAKYGDQITLHVREDRRHAQDFDLENIINFCKSPINLECALNDEILNLALKLKPHRVTLVPEKREELTTEGGLCLNHVKLKQSIEKLQNVNIEVSLFINPSLEDIEKSQILKAEFIELHTGHYANLHNALFSNISHTAFALKELDQDKKTLQTQFEKELQNLKLCAKKGTKLGLKVAAGHGLNYKNVKPIVKIKEICELNIGQSIVARSVFTGLQNAILEMKELIKR</sequence>
<protein>
    <recommendedName>
        <fullName evidence="1">Pyridoxine 5'-phosphate synthase</fullName>
        <shortName evidence="1">PNP synthase</shortName>
        <ecNumber evidence="1">2.6.99.2</ecNumber>
    </recommendedName>
</protein>
<evidence type="ECO:0000255" key="1">
    <source>
        <dbReference type="HAMAP-Rule" id="MF_00279"/>
    </source>
</evidence>
<comment type="function">
    <text evidence="1">Catalyzes the complicated ring closure reaction between the two acyclic compounds 1-deoxy-D-xylulose-5-phosphate (DXP) and 3-amino-2-oxopropyl phosphate (1-amino-acetone-3-phosphate or AAP) to form pyridoxine 5'-phosphate (PNP) and inorganic phosphate.</text>
</comment>
<comment type="catalytic activity">
    <reaction evidence="1">
        <text>3-amino-2-oxopropyl phosphate + 1-deoxy-D-xylulose 5-phosphate = pyridoxine 5'-phosphate + phosphate + 2 H2O + H(+)</text>
        <dbReference type="Rhea" id="RHEA:15265"/>
        <dbReference type="ChEBI" id="CHEBI:15377"/>
        <dbReference type="ChEBI" id="CHEBI:15378"/>
        <dbReference type="ChEBI" id="CHEBI:43474"/>
        <dbReference type="ChEBI" id="CHEBI:57279"/>
        <dbReference type="ChEBI" id="CHEBI:57792"/>
        <dbReference type="ChEBI" id="CHEBI:58589"/>
        <dbReference type="EC" id="2.6.99.2"/>
    </reaction>
</comment>
<comment type="pathway">
    <text evidence="1">Cofactor biosynthesis; pyridoxine 5'-phosphate biosynthesis; pyridoxine 5'-phosphate from D-erythrose 4-phosphate: step 5/5.</text>
</comment>
<comment type="subunit">
    <text evidence="1">Homooctamer; tetramer of dimers.</text>
</comment>
<comment type="subcellular location">
    <subcellularLocation>
        <location evidence="1">Cytoplasm</location>
    </subcellularLocation>
</comment>
<comment type="similarity">
    <text evidence="1">Belongs to the PNP synthase family.</text>
</comment>